<sequence>MAELPMSTHLFARLLSRVHAVCAALIEEGALPAGIDLSRVVVEPPKDASHGDMATNAAMVLAKDAKAKPRDLADKIADKLRAEELIDQVAIAGPGFINLTLKPAVWAEALRAVLDAGAGYGRSTVGGGEKVNVEYVSANPTGPMHVGHCRGAVFGDALANLLDTAGYDVTREYYINDAGAQVDVLARSAFLRYREALGETIGEIPEGLYPGDYLKPVGEALKAEHGAALKDMPEAQWLPTVRATAIAMMMEAIKGDLAALNITHEVFFSERSLIEGGRNRVAETIEFLRAKGDVYQGRLPPPKGAPVEDYEDREQTLFRATAYGDDVDRPLLKSDGSYTYFASDIAYHKVKFDAGFANMVDVWGADHGGYIKRMQAAIQAVTAGKGALDVKIVQLVRLLRNGEPVKMSKRAGDFVTLREVVDEVGSDAVRFMMLFRKNDAVLDFDLAKVIEQSKDNPVFYVQYGHARGHSIFRNAREVVPDLPEDSKARAAMLRQAPLERLNDPAELELLKRLALYPRIVEAAAQAHEPHRIAFYLNELASEFHALWTHGRDLPHLRFIINNDAEITRARLAMVQGVVSVLASGLAILGVTAPDEMR</sequence>
<feature type="chain" id="PRO_0000242079" description="Arginine--tRNA ligase">
    <location>
        <begin position="1"/>
        <end position="597"/>
    </location>
</feature>
<feature type="short sequence motif" description="'HIGH' region">
    <location>
        <begin position="138"/>
        <end position="148"/>
    </location>
</feature>
<protein>
    <recommendedName>
        <fullName evidence="1">Arginine--tRNA ligase</fullName>
        <ecNumber evidence="1">6.1.1.19</ecNumber>
    </recommendedName>
    <alternativeName>
        <fullName evidence="1">Arginyl-tRNA synthetase</fullName>
        <shortName evidence="1">ArgRS</shortName>
    </alternativeName>
</protein>
<name>SYR_RHOPA</name>
<reference key="1">
    <citation type="journal article" date="2004" name="Nat. Biotechnol.">
        <title>Complete genome sequence of the metabolically versatile photosynthetic bacterium Rhodopseudomonas palustris.</title>
        <authorList>
            <person name="Larimer F.W."/>
            <person name="Chain P."/>
            <person name="Hauser L."/>
            <person name="Lamerdin J.E."/>
            <person name="Malfatti S."/>
            <person name="Do L."/>
            <person name="Land M.L."/>
            <person name="Pelletier D.A."/>
            <person name="Beatty J.T."/>
            <person name="Lang A.S."/>
            <person name="Tabita F.R."/>
            <person name="Gibson J.L."/>
            <person name="Hanson T.E."/>
            <person name="Bobst C."/>
            <person name="Torres y Torres J.L."/>
            <person name="Peres C."/>
            <person name="Harrison F.H."/>
            <person name="Gibson J."/>
            <person name="Harwood C.S."/>
        </authorList>
    </citation>
    <scope>NUCLEOTIDE SEQUENCE [LARGE SCALE GENOMIC DNA]</scope>
    <source>
        <strain>ATCC BAA-98 / CGA009</strain>
    </source>
</reference>
<comment type="catalytic activity">
    <reaction evidence="1">
        <text>tRNA(Arg) + L-arginine + ATP = L-arginyl-tRNA(Arg) + AMP + diphosphate</text>
        <dbReference type="Rhea" id="RHEA:20301"/>
        <dbReference type="Rhea" id="RHEA-COMP:9658"/>
        <dbReference type="Rhea" id="RHEA-COMP:9673"/>
        <dbReference type="ChEBI" id="CHEBI:30616"/>
        <dbReference type="ChEBI" id="CHEBI:32682"/>
        <dbReference type="ChEBI" id="CHEBI:33019"/>
        <dbReference type="ChEBI" id="CHEBI:78442"/>
        <dbReference type="ChEBI" id="CHEBI:78513"/>
        <dbReference type="ChEBI" id="CHEBI:456215"/>
        <dbReference type="EC" id="6.1.1.19"/>
    </reaction>
</comment>
<comment type="subunit">
    <text evidence="1">Monomer.</text>
</comment>
<comment type="subcellular location">
    <subcellularLocation>
        <location evidence="1">Cytoplasm</location>
    </subcellularLocation>
</comment>
<comment type="similarity">
    <text evidence="1">Belongs to the class-I aminoacyl-tRNA synthetase family.</text>
</comment>
<accession>Q6N5W6</accession>
<proteinExistence type="inferred from homology"/>
<gene>
    <name evidence="1" type="primary">argS</name>
    <name type="ordered locus">RPA2854</name>
</gene>
<evidence type="ECO:0000255" key="1">
    <source>
        <dbReference type="HAMAP-Rule" id="MF_00123"/>
    </source>
</evidence>
<dbReference type="EC" id="6.1.1.19" evidence="1"/>
<dbReference type="EMBL" id="BX572602">
    <property type="protein sequence ID" value="CAE28295.1"/>
    <property type="molecule type" value="Genomic_DNA"/>
</dbReference>
<dbReference type="RefSeq" id="WP_011158403.1">
    <property type="nucleotide sequence ID" value="NZ_CP116810.1"/>
</dbReference>
<dbReference type="SMR" id="Q6N5W6"/>
<dbReference type="STRING" id="258594.RPA2854"/>
<dbReference type="GeneID" id="66893932"/>
<dbReference type="eggNOG" id="COG0018">
    <property type="taxonomic scope" value="Bacteria"/>
</dbReference>
<dbReference type="HOGENOM" id="CLU_006406_0_1_5"/>
<dbReference type="PhylomeDB" id="Q6N5W6"/>
<dbReference type="GO" id="GO:0005737">
    <property type="term" value="C:cytoplasm"/>
    <property type="evidence" value="ECO:0007669"/>
    <property type="project" value="UniProtKB-SubCell"/>
</dbReference>
<dbReference type="GO" id="GO:0004814">
    <property type="term" value="F:arginine-tRNA ligase activity"/>
    <property type="evidence" value="ECO:0007669"/>
    <property type="project" value="UniProtKB-UniRule"/>
</dbReference>
<dbReference type="GO" id="GO:0005524">
    <property type="term" value="F:ATP binding"/>
    <property type="evidence" value="ECO:0007669"/>
    <property type="project" value="UniProtKB-UniRule"/>
</dbReference>
<dbReference type="GO" id="GO:0006420">
    <property type="term" value="P:arginyl-tRNA aminoacylation"/>
    <property type="evidence" value="ECO:0007669"/>
    <property type="project" value="UniProtKB-UniRule"/>
</dbReference>
<dbReference type="CDD" id="cd00671">
    <property type="entry name" value="ArgRS_core"/>
    <property type="match status" value="1"/>
</dbReference>
<dbReference type="FunFam" id="1.10.730.10:FF:000008">
    <property type="entry name" value="Arginine--tRNA ligase"/>
    <property type="match status" value="1"/>
</dbReference>
<dbReference type="FunFam" id="3.40.50.620:FF:000062">
    <property type="entry name" value="Arginine--tRNA ligase"/>
    <property type="match status" value="1"/>
</dbReference>
<dbReference type="Gene3D" id="3.30.1360.70">
    <property type="entry name" value="Arginyl tRNA synthetase N-terminal domain"/>
    <property type="match status" value="1"/>
</dbReference>
<dbReference type="Gene3D" id="3.40.50.620">
    <property type="entry name" value="HUPs"/>
    <property type="match status" value="1"/>
</dbReference>
<dbReference type="Gene3D" id="1.10.730.10">
    <property type="entry name" value="Isoleucyl-tRNA Synthetase, Domain 1"/>
    <property type="match status" value="1"/>
</dbReference>
<dbReference type="HAMAP" id="MF_00123">
    <property type="entry name" value="Arg_tRNA_synth"/>
    <property type="match status" value="1"/>
</dbReference>
<dbReference type="InterPro" id="IPR001412">
    <property type="entry name" value="aa-tRNA-synth_I_CS"/>
</dbReference>
<dbReference type="InterPro" id="IPR001278">
    <property type="entry name" value="Arg-tRNA-ligase"/>
</dbReference>
<dbReference type="InterPro" id="IPR005148">
    <property type="entry name" value="Arg-tRNA-synth_N"/>
</dbReference>
<dbReference type="InterPro" id="IPR036695">
    <property type="entry name" value="Arg-tRNA-synth_N_sf"/>
</dbReference>
<dbReference type="InterPro" id="IPR035684">
    <property type="entry name" value="ArgRS_core"/>
</dbReference>
<dbReference type="InterPro" id="IPR008909">
    <property type="entry name" value="DALR_anticod-bd"/>
</dbReference>
<dbReference type="InterPro" id="IPR014729">
    <property type="entry name" value="Rossmann-like_a/b/a_fold"/>
</dbReference>
<dbReference type="InterPro" id="IPR009080">
    <property type="entry name" value="tRNAsynth_Ia_anticodon-bd"/>
</dbReference>
<dbReference type="NCBIfam" id="TIGR00456">
    <property type="entry name" value="argS"/>
    <property type="match status" value="1"/>
</dbReference>
<dbReference type="PANTHER" id="PTHR11956:SF5">
    <property type="entry name" value="ARGININE--TRNA LIGASE, CYTOPLASMIC"/>
    <property type="match status" value="1"/>
</dbReference>
<dbReference type="PANTHER" id="PTHR11956">
    <property type="entry name" value="ARGINYL-TRNA SYNTHETASE"/>
    <property type="match status" value="1"/>
</dbReference>
<dbReference type="Pfam" id="PF03485">
    <property type="entry name" value="Arg_tRNA_synt_N"/>
    <property type="match status" value="1"/>
</dbReference>
<dbReference type="Pfam" id="PF05746">
    <property type="entry name" value="DALR_1"/>
    <property type="match status" value="1"/>
</dbReference>
<dbReference type="Pfam" id="PF00750">
    <property type="entry name" value="tRNA-synt_1d"/>
    <property type="match status" value="2"/>
</dbReference>
<dbReference type="PRINTS" id="PR01038">
    <property type="entry name" value="TRNASYNTHARG"/>
</dbReference>
<dbReference type="SMART" id="SM01016">
    <property type="entry name" value="Arg_tRNA_synt_N"/>
    <property type="match status" value="1"/>
</dbReference>
<dbReference type="SMART" id="SM00836">
    <property type="entry name" value="DALR_1"/>
    <property type="match status" value="1"/>
</dbReference>
<dbReference type="SUPFAM" id="SSF47323">
    <property type="entry name" value="Anticodon-binding domain of a subclass of class I aminoacyl-tRNA synthetases"/>
    <property type="match status" value="1"/>
</dbReference>
<dbReference type="SUPFAM" id="SSF55190">
    <property type="entry name" value="Arginyl-tRNA synthetase (ArgRS), N-terminal 'additional' domain"/>
    <property type="match status" value="1"/>
</dbReference>
<dbReference type="SUPFAM" id="SSF52374">
    <property type="entry name" value="Nucleotidylyl transferase"/>
    <property type="match status" value="1"/>
</dbReference>
<dbReference type="PROSITE" id="PS00178">
    <property type="entry name" value="AA_TRNA_LIGASE_I"/>
    <property type="match status" value="1"/>
</dbReference>
<keyword id="KW-0030">Aminoacyl-tRNA synthetase</keyword>
<keyword id="KW-0067">ATP-binding</keyword>
<keyword id="KW-0963">Cytoplasm</keyword>
<keyword id="KW-0436">Ligase</keyword>
<keyword id="KW-0547">Nucleotide-binding</keyword>
<keyword id="KW-0648">Protein biosynthesis</keyword>
<organism>
    <name type="scientific">Rhodopseudomonas palustris (strain ATCC BAA-98 / CGA009)</name>
    <dbReference type="NCBI Taxonomy" id="258594"/>
    <lineage>
        <taxon>Bacteria</taxon>
        <taxon>Pseudomonadati</taxon>
        <taxon>Pseudomonadota</taxon>
        <taxon>Alphaproteobacteria</taxon>
        <taxon>Hyphomicrobiales</taxon>
        <taxon>Nitrobacteraceae</taxon>
        <taxon>Rhodopseudomonas</taxon>
    </lineage>
</organism>